<evidence type="ECO:0000255" key="1">
    <source>
        <dbReference type="PROSITE-ProRule" id="PRU00303"/>
    </source>
</evidence>
<evidence type="ECO:0000305" key="2"/>
<gene>
    <name type="ordered locus">MPN_641</name>
    <name type="ORF">E09_orf276</name>
    <name type="ORF">MP201</name>
</gene>
<accession>P75156</accession>
<reference key="1">
    <citation type="journal article" date="1996" name="Nucleic Acids Res.">
        <title>Complete sequence analysis of the genome of the bacterium Mycoplasma pneumoniae.</title>
        <authorList>
            <person name="Himmelreich R."/>
            <person name="Hilbert H."/>
            <person name="Plagens H."/>
            <person name="Pirkl E."/>
            <person name="Li B.-C."/>
            <person name="Herrmann R."/>
        </authorList>
    </citation>
    <scope>NUCLEOTIDE SEQUENCE [LARGE SCALE GENOMIC DNA]</scope>
    <source>
        <strain>ATCC 29342 / M129 / Subtype 1</strain>
    </source>
</reference>
<organism>
    <name type="scientific">Mycoplasma pneumoniae (strain ATCC 29342 / M129 / Subtype 1)</name>
    <name type="common">Mycoplasmoides pneumoniae</name>
    <dbReference type="NCBI Taxonomy" id="272634"/>
    <lineage>
        <taxon>Bacteria</taxon>
        <taxon>Bacillati</taxon>
        <taxon>Mycoplasmatota</taxon>
        <taxon>Mycoplasmoidales</taxon>
        <taxon>Mycoplasmoidaceae</taxon>
        <taxon>Mycoplasmoides</taxon>
    </lineage>
</organism>
<protein>
    <recommendedName>
        <fullName>Uncharacterized lipoprotein MG440 homolog 3</fullName>
    </recommendedName>
</protein>
<dbReference type="EMBL" id="U00089">
    <property type="protein sequence ID" value="AAB95849.1"/>
    <property type="molecule type" value="Genomic_DNA"/>
</dbReference>
<dbReference type="PIR" id="S73527">
    <property type="entry name" value="S73527"/>
</dbReference>
<dbReference type="RefSeq" id="NP_110330.1">
    <property type="nucleotide sequence ID" value="NC_000912.1"/>
</dbReference>
<dbReference type="RefSeq" id="WP_010874998.1">
    <property type="nucleotide sequence ID" value="NZ_OU342337.1"/>
</dbReference>
<dbReference type="STRING" id="272634.MPN_641"/>
<dbReference type="EnsemblBacteria" id="AAB95849">
    <property type="protein sequence ID" value="AAB95849"/>
    <property type="gene ID" value="MPN_641"/>
</dbReference>
<dbReference type="KEGG" id="mpn:MPN_641"/>
<dbReference type="PATRIC" id="fig|272634.6.peg.704"/>
<dbReference type="HOGENOM" id="CLU_080699_0_0_14"/>
<dbReference type="OrthoDB" id="403108at2"/>
<dbReference type="BioCyc" id="MPNE272634:G1GJ3-1025-MONOMER"/>
<dbReference type="Proteomes" id="UP000000808">
    <property type="component" value="Chromosome"/>
</dbReference>
<dbReference type="GO" id="GO:0005886">
    <property type="term" value="C:plasma membrane"/>
    <property type="evidence" value="ECO:0007669"/>
    <property type="project" value="UniProtKB-SubCell"/>
</dbReference>
<dbReference type="InterPro" id="IPR001595">
    <property type="entry name" value="Lipoprotein_3"/>
</dbReference>
<dbReference type="Pfam" id="PF00938">
    <property type="entry name" value="Lipoprotein_3"/>
    <property type="match status" value="1"/>
</dbReference>
<dbReference type="PROSITE" id="PS51257">
    <property type="entry name" value="PROKAR_LIPOPROTEIN"/>
    <property type="match status" value="1"/>
</dbReference>
<feature type="signal peptide" evidence="1">
    <location>
        <begin position="1"/>
        <end position="25"/>
    </location>
</feature>
<feature type="chain" id="PRO_0000014052" description="Uncharacterized lipoprotein MG440 homolog 3">
    <location>
        <begin position="26"/>
        <end position="276"/>
    </location>
</feature>
<feature type="lipid moiety-binding region" description="N-palmitoyl cysteine" evidence="1">
    <location>
        <position position="26"/>
    </location>
</feature>
<feature type="lipid moiety-binding region" description="S-diacylglycerol cysteine" evidence="1">
    <location>
        <position position="26"/>
    </location>
</feature>
<proteinExistence type="inferred from homology"/>
<name>Y641_MYCPN</name>
<keyword id="KW-1003">Cell membrane</keyword>
<keyword id="KW-0449">Lipoprotein</keyword>
<keyword id="KW-0472">Membrane</keyword>
<keyword id="KW-0564">Palmitate</keyword>
<keyword id="KW-1185">Reference proteome</keyword>
<keyword id="KW-0732">Signal</keyword>
<sequence length="276" mass="31073">MNKKRLLPKASLGALFMLFGTALTACSNSDFQTNLTSLNQLREGVNQNTSLTQDKKAFVESLQKAFENNPEGTTKVLLDAWKFTLLDSKILESKDPSRFVKAFGSGKSNEDVEPNASVKGLRLDKRFEPSTANIINNVISLNEQKVEAFNIQYKSRTSFKVQVKLNAQGKYQKSQVQSYLQQIGLNDGDLKQESGTLSADLIFTYTVPESNLFSRKNFDTLMKKINFNTTLKIDMVGKDEIMKKILQSTTFTNNLSSQTFQDQSIDLLPYLLYSIL</sequence>
<comment type="subcellular location">
    <subcellularLocation>
        <location evidence="1">Cell membrane</location>
        <topology evidence="1">Lipid-anchor</topology>
    </subcellularLocation>
</comment>
<comment type="similarity">
    <text evidence="2">Belongs to the MG439/MG440 family.</text>
</comment>